<evidence type="ECO:0000255" key="1">
    <source>
        <dbReference type="HAMAP-Rule" id="MF_01390"/>
    </source>
</evidence>
<evidence type="ECO:0000305" key="2"/>
<reference key="1">
    <citation type="journal article" date="2003" name="Am. J. Bot.">
        <title>Angiosperm phylogeny based on matK sequence information.</title>
        <authorList>
            <person name="Hilu K.W."/>
            <person name="Borsch T."/>
            <person name="Mueller K.F."/>
            <person name="Soltis D.E."/>
            <person name="Soltis P.S."/>
            <person name="Savolainen V."/>
            <person name="Chase M.W."/>
            <person name="Powell M."/>
            <person name="Alice L.A."/>
            <person name="Evans R.C."/>
            <person name="Sanquet H."/>
            <person name="Neinhuis C."/>
            <person name="Slotta T.A.B."/>
            <person name="Rohwer J.G."/>
            <person name="Campbell C.S."/>
            <person name="Chatrou L.W."/>
        </authorList>
    </citation>
    <scope>NUCLEOTIDE SEQUENCE [GENOMIC DNA]</scope>
</reference>
<reference key="2">
    <citation type="journal article" date="2003" name="Tropics">
        <title>Phylogeny and genetic variation of Fagaceae in tropical montane forests.</title>
        <authorList>
            <person name="Kamiya K."/>
            <person name="Harada K."/>
            <person name="Ogino K."/>
            <person name="Mahani M.C."/>
            <person name="Latiff A."/>
        </authorList>
    </citation>
    <scope>NUCLEOTIDE SEQUENCE [GENOMIC DNA]</scope>
</reference>
<dbReference type="EMBL" id="AY312058">
    <property type="protein sequence ID" value="AAP78474.1"/>
    <property type="molecule type" value="Genomic_DNA"/>
</dbReference>
<dbReference type="EMBL" id="AB125043">
    <property type="protein sequence ID" value="BAD14106.1"/>
    <property type="molecule type" value="Genomic_DNA"/>
</dbReference>
<dbReference type="RefSeq" id="YP_007375024.1">
    <property type="nucleotide sequence ID" value="NC_020152.1"/>
</dbReference>
<dbReference type="GeneID" id="14469705"/>
<dbReference type="GO" id="GO:0009507">
    <property type="term" value="C:chloroplast"/>
    <property type="evidence" value="ECO:0007669"/>
    <property type="project" value="UniProtKB-SubCell"/>
</dbReference>
<dbReference type="GO" id="GO:0003723">
    <property type="term" value="F:RNA binding"/>
    <property type="evidence" value="ECO:0007669"/>
    <property type="project" value="UniProtKB-KW"/>
</dbReference>
<dbReference type="GO" id="GO:0006397">
    <property type="term" value="P:mRNA processing"/>
    <property type="evidence" value="ECO:0007669"/>
    <property type="project" value="UniProtKB-KW"/>
</dbReference>
<dbReference type="GO" id="GO:0008380">
    <property type="term" value="P:RNA splicing"/>
    <property type="evidence" value="ECO:0007669"/>
    <property type="project" value="UniProtKB-UniRule"/>
</dbReference>
<dbReference type="GO" id="GO:0008033">
    <property type="term" value="P:tRNA processing"/>
    <property type="evidence" value="ECO:0007669"/>
    <property type="project" value="UniProtKB-KW"/>
</dbReference>
<dbReference type="HAMAP" id="MF_01390">
    <property type="entry name" value="MatK"/>
    <property type="match status" value="1"/>
</dbReference>
<dbReference type="InterPro" id="IPR024937">
    <property type="entry name" value="Domain_X"/>
</dbReference>
<dbReference type="InterPro" id="IPR002866">
    <property type="entry name" value="Maturase_MatK"/>
</dbReference>
<dbReference type="InterPro" id="IPR024942">
    <property type="entry name" value="Maturase_MatK_N"/>
</dbReference>
<dbReference type="PANTHER" id="PTHR34811">
    <property type="entry name" value="MATURASE K"/>
    <property type="match status" value="1"/>
</dbReference>
<dbReference type="PANTHER" id="PTHR34811:SF1">
    <property type="entry name" value="MATURASE K"/>
    <property type="match status" value="1"/>
</dbReference>
<dbReference type="Pfam" id="PF01348">
    <property type="entry name" value="Intron_maturas2"/>
    <property type="match status" value="1"/>
</dbReference>
<dbReference type="Pfam" id="PF01824">
    <property type="entry name" value="MatK_N"/>
    <property type="match status" value="1"/>
</dbReference>
<sequence length="504" mass="59435">MEEFQGYLELDRFQQHDFLYPLIFREYSYALAHGHGLNRYMLLENIGYDNKSSLLIVKRLITTMYQQNYLKISANDSKQNPFFGYNKNLHSKILSEGFAIIVEIPFYLRLISSLEGAEIVRFYNLRSIHSIFPFLEEKFPHLNYSADILIPYPAHLEILVQTLRYRVKDASYLHLLRFFLHEYSNCNSLIITNKSISIFSKSNPRFFLFLYNSYICEYESIFLFLRNQPSHLRLTSSGVLFERLCLYRKIEHFAEVFSNDFPVIPCFLKDPFMHYVRYQGKSILASKDTPLLMNKWKSYLVNLWQCHFDVWSHAASIRINQLSKHSLDFLSYFSSVRRNPAVVRNQMLENSFLLNNAPNKLDTMVPIIPLIGSLAKAKFCNAVGHPISKLTRADLSDFEIINRFLHICRNLSHYYSGSSKKKNMYRIKYILRLSCVKTLARKHKSTARAFLKRVDLEFFQEFFTEEGGFISLIFPRASFALRRLYSGRVWYLDIIFINGLSNHE</sequence>
<protein>
    <recommendedName>
        <fullName evidence="1">Maturase K</fullName>
    </recommendedName>
    <alternativeName>
        <fullName evidence="1">Intron maturase</fullName>
    </alternativeName>
</protein>
<keyword id="KW-0150">Chloroplast</keyword>
<keyword id="KW-0507">mRNA processing</keyword>
<keyword id="KW-0934">Plastid</keyword>
<keyword id="KW-0694">RNA-binding</keyword>
<keyword id="KW-0819">tRNA processing</keyword>
<proteinExistence type="inferred from homology"/>
<geneLocation type="chloroplast"/>
<name>MATK_QUERU</name>
<comment type="function">
    <text evidence="1">Usually encoded in the trnK tRNA gene intron. Probably assists in splicing its own and other chloroplast group II introns.</text>
</comment>
<comment type="subcellular location">
    <subcellularLocation>
        <location>Plastid</location>
        <location>Chloroplast</location>
    </subcellularLocation>
</comment>
<comment type="similarity">
    <text evidence="1">Belongs to the intron maturase 2 family. MatK subfamily.</text>
</comment>
<gene>
    <name evidence="1" type="primary">matK</name>
</gene>
<feature type="chain" id="PRO_0000143667" description="Maturase K">
    <location>
        <begin position="1"/>
        <end position="504"/>
    </location>
</feature>
<feature type="sequence conflict" description="In Ref. 2; BAD14106." evidence="2" ref="2">
    <original>P</original>
    <variation>S</variation>
    <location>
        <position position="229"/>
    </location>
</feature>
<accession>Q7YM14</accession>
<accession>Q75VA6</accession>
<organism>
    <name type="scientific">Quercus rubra</name>
    <name type="common">Northern red oak</name>
    <name type="synonym">Quercus borealis</name>
    <dbReference type="NCBI Taxonomy" id="3512"/>
    <lineage>
        <taxon>Eukaryota</taxon>
        <taxon>Viridiplantae</taxon>
        <taxon>Streptophyta</taxon>
        <taxon>Embryophyta</taxon>
        <taxon>Tracheophyta</taxon>
        <taxon>Spermatophyta</taxon>
        <taxon>Magnoliopsida</taxon>
        <taxon>eudicotyledons</taxon>
        <taxon>Gunneridae</taxon>
        <taxon>Pentapetalae</taxon>
        <taxon>rosids</taxon>
        <taxon>fabids</taxon>
        <taxon>Fagales</taxon>
        <taxon>Fagaceae</taxon>
        <taxon>Quercus</taxon>
    </lineage>
</organism>